<evidence type="ECO:0000255" key="1">
    <source>
        <dbReference type="HAMAP-Rule" id="MF_00011"/>
    </source>
</evidence>
<organism>
    <name type="scientific">Ligilactobacillus salivarius (strain UCC118)</name>
    <name type="common">Lactobacillus salivarius</name>
    <dbReference type="NCBI Taxonomy" id="362948"/>
    <lineage>
        <taxon>Bacteria</taxon>
        <taxon>Bacillati</taxon>
        <taxon>Bacillota</taxon>
        <taxon>Bacilli</taxon>
        <taxon>Lactobacillales</taxon>
        <taxon>Lactobacillaceae</taxon>
        <taxon>Ligilactobacillus</taxon>
    </lineage>
</organism>
<comment type="function">
    <text evidence="1">Plays an important role in the de novo pathway of purine nucleotide biosynthesis. Catalyzes the first committed step in the biosynthesis of AMP from IMP.</text>
</comment>
<comment type="catalytic activity">
    <reaction evidence="1">
        <text>IMP + L-aspartate + GTP = N(6)-(1,2-dicarboxyethyl)-AMP + GDP + phosphate + 2 H(+)</text>
        <dbReference type="Rhea" id="RHEA:15753"/>
        <dbReference type="ChEBI" id="CHEBI:15378"/>
        <dbReference type="ChEBI" id="CHEBI:29991"/>
        <dbReference type="ChEBI" id="CHEBI:37565"/>
        <dbReference type="ChEBI" id="CHEBI:43474"/>
        <dbReference type="ChEBI" id="CHEBI:57567"/>
        <dbReference type="ChEBI" id="CHEBI:58053"/>
        <dbReference type="ChEBI" id="CHEBI:58189"/>
        <dbReference type="EC" id="6.3.4.4"/>
    </reaction>
</comment>
<comment type="cofactor">
    <cofactor evidence="1">
        <name>Mg(2+)</name>
        <dbReference type="ChEBI" id="CHEBI:18420"/>
    </cofactor>
    <text evidence="1">Binds 1 Mg(2+) ion per subunit.</text>
</comment>
<comment type="pathway">
    <text evidence="1">Purine metabolism; AMP biosynthesis via de novo pathway; AMP from IMP: step 1/2.</text>
</comment>
<comment type="subunit">
    <text evidence="1">Homodimer.</text>
</comment>
<comment type="subcellular location">
    <subcellularLocation>
        <location evidence="1">Cytoplasm</location>
    </subcellularLocation>
</comment>
<comment type="similarity">
    <text evidence="1">Belongs to the adenylosuccinate synthetase family.</text>
</comment>
<dbReference type="EC" id="6.3.4.4" evidence="1"/>
<dbReference type="EMBL" id="CP000233">
    <property type="protein sequence ID" value="ABE00526.1"/>
    <property type="molecule type" value="Genomic_DNA"/>
</dbReference>
<dbReference type="RefSeq" id="WP_003700902.1">
    <property type="nucleotide sequence ID" value="NC_007929.1"/>
</dbReference>
<dbReference type="RefSeq" id="YP_536609.1">
    <property type="nucleotide sequence ID" value="NC_007929.1"/>
</dbReference>
<dbReference type="SMR" id="Q1WRH2"/>
<dbReference type="STRING" id="362948.LSL_1724"/>
<dbReference type="KEGG" id="lsl:LSL_1724"/>
<dbReference type="PATRIC" id="fig|362948.14.peg.1821"/>
<dbReference type="HOGENOM" id="CLU_029848_0_0_9"/>
<dbReference type="OrthoDB" id="9807553at2"/>
<dbReference type="UniPathway" id="UPA00075">
    <property type="reaction ID" value="UER00335"/>
</dbReference>
<dbReference type="Proteomes" id="UP000006559">
    <property type="component" value="Chromosome"/>
</dbReference>
<dbReference type="GO" id="GO:0005737">
    <property type="term" value="C:cytoplasm"/>
    <property type="evidence" value="ECO:0007669"/>
    <property type="project" value="UniProtKB-SubCell"/>
</dbReference>
<dbReference type="GO" id="GO:0004019">
    <property type="term" value="F:adenylosuccinate synthase activity"/>
    <property type="evidence" value="ECO:0007669"/>
    <property type="project" value="UniProtKB-UniRule"/>
</dbReference>
<dbReference type="GO" id="GO:0005525">
    <property type="term" value="F:GTP binding"/>
    <property type="evidence" value="ECO:0007669"/>
    <property type="project" value="UniProtKB-UniRule"/>
</dbReference>
<dbReference type="GO" id="GO:0000287">
    <property type="term" value="F:magnesium ion binding"/>
    <property type="evidence" value="ECO:0007669"/>
    <property type="project" value="UniProtKB-UniRule"/>
</dbReference>
<dbReference type="GO" id="GO:0044208">
    <property type="term" value="P:'de novo' AMP biosynthetic process"/>
    <property type="evidence" value="ECO:0007669"/>
    <property type="project" value="UniProtKB-UniRule"/>
</dbReference>
<dbReference type="GO" id="GO:0046040">
    <property type="term" value="P:IMP metabolic process"/>
    <property type="evidence" value="ECO:0007669"/>
    <property type="project" value="TreeGrafter"/>
</dbReference>
<dbReference type="CDD" id="cd03108">
    <property type="entry name" value="AdSS"/>
    <property type="match status" value="1"/>
</dbReference>
<dbReference type="FunFam" id="1.10.300.10:FF:000001">
    <property type="entry name" value="Adenylosuccinate synthetase"/>
    <property type="match status" value="1"/>
</dbReference>
<dbReference type="FunFam" id="3.90.170.10:FF:000001">
    <property type="entry name" value="Adenylosuccinate synthetase"/>
    <property type="match status" value="1"/>
</dbReference>
<dbReference type="Gene3D" id="3.40.440.10">
    <property type="entry name" value="Adenylosuccinate Synthetase, subunit A, domain 1"/>
    <property type="match status" value="1"/>
</dbReference>
<dbReference type="Gene3D" id="1.10.300.10">
    <property type="entry name" value="Adenylosuccinate Synthetase, subunit A, domain 2"/>
    <property type="match status" value="1"/>
</dbReference>
<dbReference type="Gene3D" id="3.90.170.10">
    <property type="entry name" value="Adenylosuccinate Synthetase, subunit A, domain 3"/>
    <property type="match status" value="1"/>
</dbReference>
<dbReference type="HAMAP" id="MF_00011">
    <property type="entry name" value="Adenylosucc_synth"/>
    <property type="match status" value="1"/>
</dbReference>
<dbReference type="InterPro" id="IPR018220">
    <property type="entry name" value="Adenylosuccin_syn_GTP-bd"/>
</dbReference>
<dbReference type="InterPro" id="IPR033128">
    <property type="entry name" value="Adenylosuccin_syn_Lys_AS"/>
</dbReference>
<dbReference type="InterPro" id="IPR042109">
    <property type="entry name" value="Adenylosuccinate_synth_dom1"/>
</dbReference>
<dbReference type="InterPro" id="IPR042110">
    <property type="entry name" value="Adenylosuccinate_synth_dom2"/>
</dbReference>
<dbReference type="InterPro" id="IPR042111">
    <property type="entry name" value="Adenylosuccinate_synth_dom3"/>
</dbReference>
<dbReference type="InterPro" id="IPR001114">
    <property type="entry name" value="Adenylosuccinate_synthetase"/>
</dbReference>
<dbReference type="InterPro" id="IPR027417">
    <property type="entry name" value="P-loop_NTPase"/>
</dbReference>
<dbReference type="NCBIfam" id="NF002223">
    <property type="entry name" value="PRK01117.1"/>
    <property type="match status" value="1"/>
</dbReference>
<dbReference type="NCBIfam" id="TIGR00184">
    <property type="entry name" value="purA"/>
    <property type="match status" value="1"/>
</dbReference>
<dbReference type="PANTHER" id="PTHR11846">
    <property type="entry name" value="ADENYLOSUCCINATE SYNTHETASE"/>
    <property type="match status" value="1"/>
</dbReference>
<dbReference type="PANTHER" id="PTHR11846:SF0">
    <property type="entry name" value="ADENYLOSUCCINATE SYNTHETASE"/>
    <property type="match status" value="1"/>
</dbReference>
<dbReference type="Pfam" id="PF00709">
    <property type="entry name" value="Adenylsucc_synt"/>
    <property type="match status" value="1"/>
</dbReference>
<dbReference type="SMART" id="SM00788">
    <property type="entry name" value="Adenylsucc_synt"/>
    <property type="match status" value="1"/>
</dbReference>
<dbReference type="SUPFAM" id="SSF52540">
    <property type="entry name" value="P-loop containing nucleoside triphosphate hydrolases"/>
    <property type="match status" value="1"/>
</dbReference>
<dbReference type="PROSITE" id="PS01266">
    <property type="entry name" value="ADENYLOSUCCIN_SYN_1"/>
    <property type="match status" value="1"/>
</dbReference>
<dbReference type="PROSITE" id="PS00513">
    <property type="entry name" value="ADENYLOSUCCIN_SYN_2"/>
    <property type="match status" value="1"/>
</dbReference>
<reference key="1">
    <citation type="journal article" date="2006" name="Proc. Natl. Acad. Sci. U.S.A.">
        <title>Multireplicon genome architecture of Lactobacillus salivarius.</title>
        <authorList>
            <person name="Claesson M.J."/>
            <person name="Li Y."/>
            <person name="Leahy S."/>
            <person name="Canchaya C."/>
            <person name="van Pijkeren J.P."/>
            <person name="Cerdeno-Tarraga A.M."/>
            <person name="Parkhill J."/>
            <person name="Flynn S."/>
            <person name="O'Sullivan G.C."/>
            <person name="Collins J.K."/>
            <person name="Higgins D."/>
            <person name="Shanahan F."/>
            <person name="Fitzgerald G.F."/>
            <person name="van Sinderen D."/>
            <person name="O'Toole P.W."/>
        </authorList>
    </citation>
    <scope>NUCLEOTIDE SEQUENCE [LARGE SCALE GENOMIC DNA]</scope>
    <source>
        <strain>UCC118</strain>
    </source>
</reference>
<proteinExistence type="inferred from homology"/>
<name>PURA_LIGS1</name>
<keyword id="KW-0963">Cytoplasm</keyword>
<keyword id="KW-0342">GTP-binding</keyword>
<keyword id="KW-0436">Ligase</keyword>
<keyword id="KW-0460">Magnesium</keyword>
<keyword id="KW-0479">Metal-binding</keyword>
<keyword id="KW-0547">Nucleotide-binding</keyword>
<keyword id="KW-0658">Purine biosynthesis</keyword>
<keyword id="KW-1185">Reference proteome</keyword>
<accession>Q1WRH2</accession>
<protein>
    <recommendedName>
        <fullName evidence="1">Adenylosuccinate synthetase</fullName>
        <shortName evidence="1">AMPSase</shortName>
        <shortName evidence="1">AdSS</shortName>
        <ecNumber evidence="1">6.3.4.4</ecNumber>
    </recommendedName>
    <alternativeName>
        <fullName evidence="1">IMP--aspartate ligase</fullName>
    </alternativeName>
</protein>
<sequence length="430" mass="47678">MSSVVVVGSQWGDEGKGKITDFLSQNAEVIARYQGGDNAGHTIAFDGKTYKLRLIPSGIFYSDKISVIGNGVVLNPKSLVTELKYLHDNGVSTDNLRISNRAHVILPYHIVLDGLQEAAKKDNKIGTTNKGIGPAYMDKAARVGIRVADLLEKDTFEEKLRTNLEEKNRLFEKMYGHEPLKFEDIFEEYYEYGQELKDYVTDTSVILNDALDSGKRVLFEGAQGVMLDIDQGTYPFVTSSNPVAGGVTIGSGVGPAKIDKVVGACKAYTSRVGDGPFPTELHDEIGDHIREVGHEYGTVTKRPRRIGWFDSVVMRHSKRVSGLTNLCLNCVDVLTGLDEIKICTAYELNGEKIYHYPASLKELSACKPVYETLPGWKEDITNCKTLEDLPENARNYIHRIQDLVGVKVSTFSVGPDREQTNVLDNVWAHI</sequence>
<feature type="chain" id="PRO_1000000847" description="Adenylosuccinate synthetase">
    <location>
        <begin position="1"/>
        <end position="430"/>
    </location>
</feature>
<feature type="active site" description="Proton acceptor" evidence="1">
    <location>
        <position position="13"/>
    </location>
</feature>
<feature type="active site" description="Proton donor" evidence="1">
    <location>
        <position position="41"/>
    </location>
</feature>
<feature type="binding site" evidence="1">
    <location>
        <begin position="12"/>
        <end position="18"/>
    </location>
    <ligand>
        <name>GTP</name>
        <dbReference type="ChEBI" id="CHEBI:37565"/>
    </ligand>
</feature>
<feature type="binding site" description="in other chain" evidence="1">
    <location>
        <begin position="13"/>
        <end position="16"/>
    </location>
    <ligand>
        <name>IMP</name>
        <dbReference type="ChEBI" id="CHEBI:58053"/>
        <note>ligand shared between dimeric partners</note>
    </ligand>
</feature>
<feature type="binding site" evidence="1">
    <location>
        <position position="13"/>
    </location>
    <ligand>
        <name>Mg(2+)</name>
        <dbReference type="ChEBI" id="CHEBI:18420"/>
    </ligand>
</feature>
<feature type="binding site" description="in other chain" evidence="1">
    <location>
        <begin position="38"/>
        <end position="41"/>
    </location>
    <ligand>
        <name>IMP</name>
        <dbReference type="ChEBI" id="CHEBI:58053"/>
        <note>ligand shared between dimeric partners</note>
    </ligand>
</feature>
<feature type="binding site" evidence="1">
    <location>
        <begin position="40"/>
        <end position="42"/>
    </location>
    <ligand>
        <name>GTP</name>
        <dbReference type="ChEBI" id="CHEBI:37565"/>
    </ligand>
</feature>
<feature type="binding site" evidence="1">
    <location>
        <position position="40"/>
    </location>
    <ligand>
        <name>Mg(2+)</name>
        <dbReference type="ChEBI" id="CHEBI:18420"/>
    </ligand>
</feature>
<feature type="binding site" description="in other chain" evidence="1">
    <location>
        <position position="128"/>
    </location>
    <ligand>
        <name>IMP</name>
        <dbReference type="ChEBI" id="CHEBI:58053"/>
        <note>ligand shared between dimeric partners</note>
    </ligand>
</feature>
<feature type="binding site" evidence="1">
    <location>
        <position position="142"/>
    </location>
    <ligand>
        <name>IMP</name>
        <dbReference type="ChEBI" id="CHEBI:58053"/>
        <note>ligand shared between dimeric partners</note>
    </ligand>
</feature>
<feature type="binding site" description="in other chain" evidence="1">
    <location>
        <position position="223"/>
    </location>
    <ligand>
        <name>IMP</name>
        <dbReference type="ChEBI" id="CHEBI:58053"/>
        <note>ligand shared between dimeric partners</note>
    </ligand>
</feature>
<feature type="binding site" description="in other chain" evidence="1">
    <location>
        <position position="238"/>
    </location>
    <ligand>
        <name>IMP</name>
        <dbReference type="ChEBI" id="CHEBI:58053"/>
        <note>ligand shared between dimeric partners</note>
    </ligand>
</feature>
<feature type="binding site" evidence="1">
    <location>
        <begin position="298"/>
        <end position="304"/>
    </location>
    <ligand>
        <name>substrate</name>
    </ligand>
</feature>
<feature type="binding site" description="in other chain" evidence="1">
    <location>
        <position position="302"/>
    </location>
    <ligand>
        <name>IMP</name>
        <dbReference type="ChEBI" id="CHEBI:58053"/>
        <note>ligand shared between dimeric partners</note>
    </ligand>
</feature>
<feature type="binding site" evidence="1">
    <location>
        <position position="304"/>
    </location>
    <ligand>
        <name>GTP</name>
        <dbReference type="ChEBI" id="CHEBI:37565"/>
    </ligand>
</feature>
<feature type="binding site" evidence="1">
    <location>
        <begin position="330"/>
        <end position="332"/>
    </location>
    <ligand>
        <name>GTP</name>
        <dbReference type="ChEBI" id="CHEBI:37565"/>
    </ligand>
</feature>
<feature type="binding site" evidence="1">
    <location>
        <begin position="412"/>
        <end position="414"/>
    </location>
    <ligand>
        <name>GTP</name>
        <dbReference type="ChEBI" id="CHEBI:37565"/>
    </ligand>
</feature>
<gene>
    <name evidence="1" type="primary">purA</name>
    <name type="ordered locus">LSL_1724</name>
</gene>